<organism>
    <name type="scientific">Neisseria gonorrhoeae (strain ATCC 700825 / FA 1090)</name>
    <dbReference type="NCBI Taxonomy" id="242231"/>
    <lineage>
        <taxon>Bacteria</taxon>
        <taxon>Pseudomonadati</taxon>
        <taxon>Pseudomonadota</taxon>
        <taxon>Betaproteobacteria</taxon>
        <taxon>Neisseriales</taxon>
        <taxon>Neisseriaceae</taxon>
        <taxon>Neisseria</taxon>
    </lineage>
</organism>
<name>LOLD_NEIG1</name>
<gene>
    <name evidence="1" type="primary">lolD</name>
    <name type="ordered locus">NGO_0770</name>
</gene>
<evidence type="ECO:0000255" key="1">
    <source>
        <dbReference type="HAMAP-Rule" id="MF_01708"/>
    </source>
</evidence>
<proteinExistence type="inferred from homology"/>
<comment type="function">
    <text evidence="1">Part of the ABC transporter complex LolCDE involved in the translocation of mature outer membrane-directed lipoproteins, from the inner membrane to the periplasmic chaperone, LolA. Responsible for the formation of the LolA-lipoprotein complex in an ATP-dependent manner.</text>
</comment>
<comment type="subunit">
    <text evidence="1">The complex is composed of two ATP-binding proteins (LolD) and two transmembrane proteins (LolC and LolE).</text>
</comment>
<comment type="subcellular location">
    <subcellularLocation>
        <location evidence="1">Cell inner membrane</location>
        <topology evidence="1">Peripheral membrane protein</topology>
    </subcellularLocation>
</comment>
<comment type="similarity">
    <text evidence="1">Belongs to the ABC transporter superfamily. Lipoprotein translocase (TC 3.A.1.125) family.</text>
</comment>
<reference key="1">
    <citation type="submission" date="2003-03" db="EMBL/GenBank/DDBJ databases">
        <title>The complete genome sequence of Neisseria gonorrhoeae.</title>
        <authorList>
            <person name="Lewis L.A."/>
            <person name="Gillaspy A.F."/>
            <person name="McLaughlin R.E."/>
            <person name="Gipson M."/>
            <person name="Ducey T.F."/>
            <person name="Ownbey T."/>
            <person name="Hartman K."/>
            <person name="Nydick C."/>
            <person name="Carson M.B."/>
            <person name="Vaughn J."/>
            <person name="Thomson C."/>
            <person name="Song L."/>
            <person name="Lin S."/>
            <person name="Yuan X."/>
            <person name="Najar F."/>
            <person name="Zhan M."/>
            <person name="Ren Q."/>
            <person name="Zhu H."/>
            <person name="Qi S."/>
            <person name="Kenton S.M."/>
            <person name="Lai H."/>
            <person name="White J.D."/>
            <person name="Clifton S."/>
            <person name="Roe B.A."/>
            <person name="Dyer D.W."/>
        </authorList>
    </citation>
    <scope>NUCLEOTIDE SEQUENCE [LARGE SCALE GENOMIC DNA]</scope>
    <source>
        <strain>ATCC 700825 / FA 1090</strain>
    </source>
</reference>
<protein>
    <recommendedName>
        <fullName evidence="1">Lipoprotein-releasing system ATP-binding protein LolD</fullName>
        <ecNumber evidence="1">7.6.2.-</ecNumber>
    </recommendedName>
</protein>
<dbReference type="EC" id="7.6.2.-" evidence="1"/>
<dbReference type="EMBL" id="AE004969">
    <property type="protein sequence ID" value="AAW89485.1"/>
    <property type="molecule type" value="Genomic_DNA"/>
</dbReference>
<dbReference type="RefSeq" id="WP_003688655.1">
    <property type="nucleotide sequence ID" value="NC_002946.2"/>
</dbReference>
<dbReference type="RefSeq" id="YP_207897.1">
    <property type="nucleotide sequence ID" value="NC_002946.2"/>
</dbReference>
<dbReference type="SMR" id="Q5F8K2"/>
<dbReference type="STRING" id="242231.NGO_0770"/>
<dbReference type="GeneID" id="66753111"/>
<dbReference type="KEGG" id="ngo:NGO_0770"/>
<dbReference type="PATRIC" id="fig|242231.10.peg.916"/>
<dbReference type="HOGENOM" id="CLU_000604_1_22_4"/>
<dbReference type="Proteomes" id="UP000000535">
    <property type="component" value="Chromosome"/>
</dbReference>
<dbReference type="GO" id="GO:0005886">
    <property type="term" value="C:plasma membrane"/>
    <property type="evidence" value="ECO:0007669"/>
    <property type="project" value="UniProtKB-SubCell"/>
</dbReference>
<dbReference type="GO" id="GO:0005524">
    <property type="term" value="F:ATP binding"/>
    <property type="evidence" value="ECO:0007669"/>
    <property type="project" value="UniProtKB-KW"/>
</dbReference>
<dbReference type="GO" id="GO:0016887">
    <property type="term" value="F:ATP hydrolysis activity"/>
    <property type="evidence" value="ECO:0007669"/>
    <property type="project" value="InterPro"/>
</dbReference>
<dbReference type="GO" id="GO:0022857">
    <property type="term" value="F:transmembrane transporter activity"/>
    <property type="evidence" value="ECO:0007669"/>
    <property type="project" value="TreeGrafter"/>
</dbReference>
<dbReference type="GO" id="GO:0044874">
    <property type="term" value="P:lipoprotein localization to outer membrane"/>
    <property type="evidence" value="ECO:0007669"/>
    <property type="project" value="TreeGrafter"/>
</dbReference>
<dbReference type="GO" id="GO:0089705">
    <property type="term" value="P:protein localization to outer membrane"/>
    <property type="evidence" value="ECO:0007669"/>
    <property type="project" value="TreeGrafter"/>
</dbReference>
<dbReference type="CDD" id="cd03255">
    <property type="entry name" value="ABC_MJ0796_LolCDE_FtsE"/>
    <property type="match status" value="1"/>
</dbReference>
<dbReference type="FunFam" id="3.40.50.300:FF:000230">
    <property type="entry name" value="Lipoprotein-releasing system ATP-binding protein LolD"/>
    <property type="match status" value="1"/>
</dbReference>
<dbReference type="Gene3D" id="3.40.50.300">
    <property type="entry name" value="P-loop containing nucleotide triphosphate hydrolases"/>
    <property type="match status" value="1"/>
</dbReference>
<dbReference type="InterPro" id="IPR003593">
    <property type="entry name" value="AAA+_ATPase"/>
</dbReference>
<dbReference type="InterPro" id="IPR003439">
    <property type="entry name" value="ABC_transporter-like_ATP-bd"/>
</dbReference>
<dbReference type="InterPro" id="IPR017871">
    <property type="entry name" value="ABC_transporter-like_CS"/>
</dbReference>
<dbReference type="InterPro" id="IPR015854">
    <property type="entry name" value="ABC_transpr_LolD-like"/>
</dbReference>
<dbReference type="InterPro" id="IPR011924">
    <property type="entry name" value="LolD_lipo_ATP-bd"/>
</dbReference>
<dbReference type="InterPro" id="IPR017911">
    <property type="entry name" value="MacB-like_ATP-bd"/>
</dbReference>
<dbReference type="InterPro" id="IPR027417">
    <property type="entry name" value="P-loop_NTPase"/>
</dbReference>
<dbReference type="NCBIfam" id="TIGR02211">
    <property type="entry name" value="LolD_lipo_ex"/>
    <property type="match status" value="1"/>
</dbReference>
<dbReference type="PANTHER" id="PTHR24220">
    <property type="entry name" value="IMPORT ATP-BINDING PROTEIN"/>
    <property type="match status" value="1"/>
</dbReference>
<dbReference type="PANTHER" id="PTHR24220:SF689">
    <property type="entry name" value="LIPOPROTEIN-RELEASING SYSTEM ATP-BINDING PROTEIN LOLD"/>
    <property type="match status" value="1"/>
</dbReference>
<dbReference type="Pfam" id="PF00005">
    <property type="entry name" value="ABC_tran"/>
    <property type="match status" value="1"/>
</dbReference>
<dbReference type="SMART" id="SM00382">
    <property type="entry name" value="AAA"/>
    <property type="match status" value="1"/>
</dbReference>
<dbReference type="SUPFAM" id="SSF52540">
    <property type="entry name" value="P-loop containing nucleoside triphosphate hydrolases"/>
    <property type="match status" value="1"/>
</dbReference>
<dbReference type="PROSITE" id="PS00211">
    <property type="entry name" value="ABC_TRANSPORTER_1"/>
    <property type="match status" value="1"/>
</dbReference>
<dbReference type="PROSITE" id="PS50893">
    <property type="entry name" value="ABC_TRANSPORTER_2"/>
    <property type="match status" value="1"/>
</dbReference>
<dbReference type="PROSITE" id="PS51244">
    <property type="entry name" value="LOLD"/>
    <property type="match status" value="1"/>
</dbReference>
<feature type="chain" id="PRO_0000272109" description="Lipoprotein-releasing system ATP-binding protein LolD">
    <location>
        <begin position="1"/>
        <end position="231"/>
    </location>
</feature>
<feature type="domain" description="ABC transporter" evidence="1">
    <location>
        <begin position="6"/>
        <end position="231"/>
    </location>
</feature>
<feature type="binding site" evidence="1">
    <location>
        <begin position="42"/>
        <end position="49"/>
    </location>
    <ligand>
        <name>ATP</name>
        <dbReference type="ChEBI" id="CHEBI:30616"/>
    </ligand>
</feature>
<sequence>MSDLILKCEGVGKRYRDGGLDVPVLYGLDLEIRTGESTGIIGSSGSGKSTLLHILGGLDMPSEGRVLLMGEDLRALNQRRLGDLRNRHLGFVYQFHHLLPEFSALENVMMPLLIGKKSRKEAVETAMAMLDKVGLKHRSTHRAGELSGGERQRAAIARALVTQPKCLLADEPTGNLDRANARNVLDMMLELKTELGTGLVVVTHDDELAGRFERVMVMKDGSLHPRQGANA</sequence>
<keyword id="KW-0067">ATP-binding</keyword>
<keyword id="KW-0997">Cell inner membrane</keyword>
<keyword id="KW-1003">Cell membrane</keyword>
<keyword id="KW-0472">Membrane</keyword>
<keyword id="KW-0547">Nucleotide-binding</keyword>
<keyword id="KW-1185">Reference proteome</keyword>
<keyword id="KW-1278">Translocase</keyword>
<keyword id="KW-0813">Transport</keyword>
<accession>Q5F8K2</accession>